<proteinExistence type="evidence at protein level"/>
<feature type="chain" id="PRO_0000079697" description="40 kDa cell wall protein">
    <location>
        <begin position="1"/>
        <end position="15" status="greater than"/>
    </location>
</feature>
<feature type="non-terminal residue" evidence="2">
    <location>
        <position position="15"/>
    </location>
</feature>
<accession>P80818</accession>
<comment type="subcellular location">
    <subcellularLocation>
        <location evidence="1">Secreted</location>
        <location evidence="1">Cell wall</location>
    </subcellularLocation>
</comment>
<name>CWP22_SOLLC</name>
<organism>
    <name type="scientific">Solanum lycopersicum</name>
    <name type="common">Tomato</name>
    <name type="synonym">Lycopersicon esculentum</name>
    <dbReference type="NCBI Taxonomy" id="4081"/>
    <lineage>
        <taxon>Eukaryota</taxon>
        <taxon>Viridiplantae</taxon>
        <taxon>Streptophyta</taxon>
        <taxon>Embryophyta</taxon>
        <taxon>Tracheophyta</taxon>
        <taxon>Spermatophyta</taxon>
        <taxon>Magnoliopsida</taxon>
        <taxon>eudicotyledons</taxon>
        <taxon>Gunneridae</taxon>
        <taxon>Pentapetalae</taxon>
        <taxon>asterids</taxon>
        <taxon>lamiids</taxon>
        <taxon>Solanales</taxon>
        <taxon>Solanaceae</taxon>
        <taxon>Solanoideae</taxon>
        <taxon>Solaneae</taxon>
        <taxon>Solanum</taxon>
        <taxon>Solanum subgen. Lycopersicon</taxon>
    </lineage>
</organism>
<reference evidence="3" key="1">
    <citation type="journal article" date="1997" name="J. Biol. Chem.">
        <title>Differential extraction and protein sequencing reveals major differences in patterns of primary cell wall proteins from plants.</title>
        <authorList>
            <person name="Robertson D."/>
            <person name="Mitchell G.P."/>
            <person name="Gilroy J.S."/>
            <person name="Gerrish C."/>
            <person name="Bolwell G.P."/>
            <person name="Slabas A.R."/>
        </authorList>
    </citation>
    <scope>PROTEIN SEQUENCE</scope>
    <scope>SUBCELLULAR LOCATION</scope>
</reference>
<evidence type="ECO:0000269" key="1">
    <source>
    </source>
</evidence>
<evidence type="ECO:0000303" key="2">
    <source>
    </source>
</evidence>
<evidence type="ECO:0000305" key="3"/>
<sequence>GPVEIYYLQSADAKG</sequence>
<dbReference type="InParanoid" id="P80818"/>
<dbReference type="Proteomes" id="UP000004994">
    <property type="component" value="Unplaced"/>
</dbReference>
<dbReference type="GO" id="GO:0005576">
    <property type="term" value="C:extracellular region"/>
    <property type="evidence" value="ECO:0007669"/>
    <property type="project" value="UniProtKB-KW"/>
</dbReference>
<keyword id="KW-0134">Cell wall</keyword>
<keyword id="KW-0903">Direct protein sequencing</keyword>
<keyword id="KW-1185">Reference proteome</keyword>
<keyword id="KW-0964">Secreted</keyword>
<protein>
    <recommendedName>
        <fullName>40 kDa cell wall protein</fullName>
    </recommendedName>
</protein>